<organism>
    <name type="scientific">Pseudomonas syringae pv. tomato (strain ATCC BAA-871 / DC3000)</name>
    <dbReference type="NCBI Taxonomy" id="223283"/>
    <lineage>
        <taxon>Bacteria</taxon>
        <taxon>Pseudomonadati</taxon>
        <taxon>Pseudomonadota</taxon>
        <taxon>Gammaproteobacteria</taxon>
        <taxon>Pseudomonadales</taxon>
        <taxon>Pseudomonadaceae</taxon>
        <taxon>Pseudomonas</taxon>
    </lineage>
</organism>
<keyword id="KW-0004">4Fe-4S</keyword>
<keyword id="KW-0997">Cell inner membrane</keyword>
<keyword id="KW-1003">Cell membrane</keyword>
<keyword id="KW-0408">Iron</keyword>
<keyword id="KW-0411">Iron-sulfur</keyword>
<keyword id="KW-0472">Membrane</keyword>
<keyword id="KW-0479">Metal-binding</keyword>
<keyword id="KW-0520">NAD</keyword>
<keyword id="KW-0874">Quinone</keyword>
<keyword id="KW-1185">Reference proteome</keyword>
<keyword id="KW-0677">Repeat</keyword>
<keyword id="KW-1278">Translocase</keyword>
<keyword id="KW-0830">Ubiquinone</keyword>
<reference key="1">
    <citation type="journal article" date="2003" name="Proc. Natl. Acad. Sci. U.S.A.">
        <title>The complete genome sequence of the Arabidopsis and tomato pathogen Pseudomonas syringae pv. tomato DC3000.</title>
        <authorList>
            <person name="Buell C.R."/>
            <person name="Joardar V."/>
            <person name="Lindeberg M."/>
            <person name="Selengut J."/>
            <person name="Paulsen I.T."/>
            <person name="Gwinn M.L."/>
            <person name="Dodson R.J."/>
            <person name="DeBoy R.T."/>
            <person name="Durkin A.S."/>
            <person name="Kolonay J.F."/>
            <person name="Madupu R."/>
            <person name="Daugherty S.C."/>
            <person name="Brinkac L.M."/>
            <person name="Beanan M.J."/>
            <person name="Haft D.H."/>
            <person name="Nelson W.C."/>
            <person name="Davidsen T.M."/>
            <person name="Zafar N."/>
            <person name="Zhou L."/>
            <person name="Liu J."/>
            <person name="Yuan Q."/>
            <person name="Khouri H.M."/>
            <person name="Fedorova N.B."/>
            <person name="Tran B."/>
            <person name="Russell D."/>
            <person name="Berry K.J."/>
            <person name="Utterback T.R."/>
            <person name="Van Aken S.E."/>
            <person name="Feldblyum T.V."/>
            <person name="D'Ascenzo M."/>
            <person name="Deng W.-L."/>
            <person name="Ramos A.R."/>
            <person name="Alfano J.R."/>
            <person name="Cartinhour S."/>
            <person name="Chatterjee A.K."/>
            <person name="Delaney T.P."/>
            <person name="Lazarowitz S.G."/>
            <person name="Martin G.B."/>
            <person name="Schneider D.J."/>
            <person name="Tang X."/>
            <person name="Bender C.L."/>
            <person name="White O."/>
            <person name="Fraser C.M."/>
            <person name="Collmer A."/>
        </authorList>
    </citation>
    <scope>NUCLEOTIDE SEQUENCE [LARGE SCALE GENOMIC DNA]</scope>
    <source>
        <strain>ATCC BAA-871 / DC3000</strain>
    </source>
</reference>
<name>NUOI_PSESM</name>
<evidence type="ECO:0000255" key="1">
    <source>
        <dbReference type="HAMAP-Rule" id="MF_01351"/>
    </source>
</evidence>
<protein>
    <recommendedName>
        <fullName evidence="1">NADH-quinone oxidoreductase subunit I</fullName>
        <ecNumber evidence="1">7.1.1.-</ecNumber>
    </recommendedName>
    <alternativeName>
        <fullName evidence="1">NADH dehydrogenase I subunit I</fullName>
    </alternativeName>
    <alternativeName>
        <fullName evidence="1">NDH-1 subunit I</fullName>
    </alternativeName>
</protein>
<comment type="function">
    <text evidence="1">NDH-1 shuttles electrons from NADH, via FMN and iron-sulfur (Fe-S) centers, to quinones in the respiratory chain. The immediate electron acceptor for the enzyme in this species is believed to be ubiquinone. Couples the redox reaction to proton translocation (for every two electrons transferred, four hydrogen ions are translocated across the cytoplasmic membrane), and thus conserves the redox energy in a proton gradient.</text>
</comment>
<comment type="catalytic activity">
    <reaction evidence="1">
        <text>a quinone + NADH + 5 H(+)(in) = a quinol + NAD(+) + 4 H(+)(out)</text>
        <dbReference type="Rhea" id="RHEA:57888"/>
        <dbReference type="ChEBI" id="CHEBI:15378"/>
        <dbReference type="ChEBI" id="CHEBI:24646"/>
        <dbReference type="ChEBI" id="CHEBI:57540"/>
        <dbReference type="ChEBI" id="CHEBI:57945"/>
        <dbReference type="ChEBI" id="CHEBI:132124"/>
    </reaction>
</comment>
<comment type="cofactor">
    <cofactor evidence="1">
        <name>[4Fe-4S] cluster</name>
        <dbReference type="ChEBI" id="CHEBI:49883"/>
    </cofactor>
    <text evidence="1">Binds 2 [4Fe-4S] clusters per subunit.</text>
</comment>
<comment type="subunit">
    <text evidence="1">NDH-1 is composed of 13 different subunits. Subunits NuoA, H, J, K, L, M, N constitute the membrane sector of the complex.</text>
</comment>
<comment type="subcellular location">
    <subcellularLocation>
        <location evidence="1">Cell inner membrane</location>
        <topology evidence="1">Peripheral membrane protein</topology>
    </subcellularLocation>
</comment>
<comment type="similarity">
    <text evidence="1">Belongs to the complex I 23 kDa subunit family.</text>
</comment>
<dbReference type="EC" id="7.1.1.-" evidence="1"/>
<dbReference type="EMBL" id="AE016853">
    <property type="protein sequence ID" value="AAO56850.1"/>
    <property type="molecule type" value="Genomic_DNA"/>
</dbReference>
<dbReference type="RefSeq" id="NP_793155.1">
    <property type="nucleotide sequence ID" value="NC_004578.1"/>
</dbReference>
<dbReference type="RefSeq" id="WP_003380115.1">
    <property type="nucleotide sequence ID" value="NC_004578.1"/>
</dbReference>
<dbReference type="SMR" id="Q87ZQ2"/>
<dbReference type="STRING" id="223283.PSPTO_3372"/>
<dbReference type="GeneID" id="73735310"/>
<dbReference type="KEGG" id="pst:PSPTO_3372"/>
<dbReference type="PATRIC" id="fig|223283.9.peg.3452"/>
<dbReference type="eggNOG" id="COG1143">
    <property type="taxonomic scope" value="Bacteria"/>
</dbReference>
<dbReference type="HOGENOM" id="CLU_067218_4_3_6"/>
<dbReference type="OrthoDB" id="9808559at2"/>
<dbReference type="PhylomeDB" id="Q87ZQ2"/>
<dbReference type="Proteomes" id="UP000002515">
    <property type="component" value="Chromosome"/>
</dbReference>
<dbReference type="GO" id="GO:0005886">
    <property type="term" value="C:plasma membrane"/>
    <property type="evidence" value="ECO:0007669"/>
    <property type="project" value="UniProtKB-SubCell"/>
</dbReference>
<dbReference type="GO" id="GO:0051539">
    <property type="term" value="F:4 iron, 4 sulfur cluster binding"/>
    <property type="evidence" value="ECO:0007669"/>
    <property type="project" value="UniProtKB-KW"/>
</dbReference>
<dbReference type="GO" id="GO:0005506">
    <property type="term" value="F:iron ion binding"/>
    <property type="evidence" value="ECO:0007669"/>
    <property type="project" value="UniProtKB-UniRule"/>
</dbReference>
<dbReference type="GO" id="GO:0050136">
    <property type="term" value="F:NADH:ubiquinone reductase (non-electrogenic) activity"/>
    <property type="evidence" value="ECO:0007669"/>
    <property type="project" value="UniProtKB-UniRule"/>
</dbReference>
<dbReference type="GO" id="GO:0048038">
    <property type="term" value="F:quinone binding"/>
    <property type="evidence" value="ECO:0007669"/>
    <property type="project" value="UniProtKB-KW"/>
</dbReference>
<dbReference type="GO" id="GO:0009060">
    <property type="term" value="P:aerobic respiration"/>
    <property type="evidence" value="ECO:0007669"/>
    <property type="project" value="TreeGrafter"/>
</dbReference>
<dbReference type="FunFam" id="3.30.70.3270:FF:000002">
    <property type="entry name" value="NADH-quinone oxidoreductase subunit I"/>
    <property type="match status" value="1"/>
</dbReference>
<dbReference type="Gene3D" id="3.30.70.3270">
    <property type="match status" value="1"/>
</dbReference>
<dbReference type="HAMAP" id="MF_01351">
    <property type="entry name" value="NDH1_NuoI"/>
    <property type="match status" value="1"/>
</dbReference>
<dbReference type="InterPro" id="IPR017896">
    <property type="entry name" value="4Fe4S_Fe-S-bd"/>
</dbReference>
<dbReference type="InterPro" id="IPR017900">
    <property type="entry name" value="4Fe4S_Fe_S_CS"/>
</dbReference>
<dbReference type="InterPro" id="IPR010226">
    <property type="entry name" value="NADH_quinone_OxRdtase_chainI"/>
</dbReference>
<dbReference type="NCBIfam" id="TIGR01971">
    <property type="entry name" value="NuoI"/>
    <property type="match status" value="1"/>
</dbReference>
<dbReference type="NCBIfam" id="NF004536">
    <property type="entry name" value="PRK05888.1-1"/>
    <property type="match status" value="1"/>
</dbReference>
<dbReference type="PANTHER" id="PTHR10849:SF20">
    <property type="entry name" value="NADH DEHYDROGENASE [UBIQUINONE] IRON-SULFUR PROTEIN 8, MITOCHONDRIAL"/>
    <property type="match status" value="1"/>
</dbReference>
<dbReference type="PANTHER" id="PTHR10849">
    <property type="entry name" value="NADH DEHYDROGENASE UBIQUINONE IRON-SULFUR PROTEIN 8, MITOCHONDRIAL"/>
    <property type="match status" value="1"/>
</dbReference>
<dbReference type="Pfam" id="PF12838">
    <property type="entry name" value="Fer4_7"/>
    <property type="match status" value="1"/>
</dbReference>
<dbReference type="SUPFAM" id="SSF54862">
    <property type="entry name" value="4Fe-4S ferredoxins"/>
    <property type="match status" value="1"/>
</dbReference>
<dbReference type="PROSITE" id="PS00198">
    <property type="entry name" value="4FE4S_FER_1"/>
    <property type="match status" value="2"/>
</dbReference>
<dbReference type="PROSITE" id="PS51379">
    <property type="entry name" value="4FE4S_FER_2"/>
    <property type="match status" value="2"/>
</dbReference>
<accession>Q87ZQ2</accession>
<proteinExistence type="inferred from homology"/>
<gene>
    <name evidence="1" type="primary">nuoI</name>
    <name type="ordered locus">PSPTO_3372</name>
</gene>
<sequence>MFKYIGDIVKGTGTQLRSMVMVFGHGFRKRDTLQYPEEQVYLPPRYRGRIVLTRDPDGEERCVACNLCAVACPVGCISLQKAETEDGRWYPDFFRINFSRCIFCGLCEEACPTTAIQLTPDFEMADFKRQDLVYEKEDLLISGPGKNPDYNFYRVAGMAIGGKPKGAAQNEAEPINVKSLLP</sequence>
<feature type="chain" id="PRO_0000245732" description="NADH-quinone oxidoreductase subunit I">
    <location>
        <begin position="1"/>
        <end position="182"/>
    </location>
</feature>
<feature type="domain" description="4Fe-4S ferredoxin-type 1" evidence="1">
    <location>
        <begin position="52"/>
        <end position="82"/>
    </location>
</feature>
<feature type="domain" description="4Fe-4S ferredoxin-type 2" evidence="1">
    <location>
        <begin position="92"/>
        <end position="121"/>
    </location>
</feature>
<feature type="binding site" evidence="1">
    <location>
        <position position="62"/>
    </location>
    <ligand>
        <name>[4Fe-4S] cluster</name>
        <dbReference type="ChEBI" id="CHEBI:49883"/>
        <label>1</label>
    </ligand>
</feature>
<feature type="binding site" evidence="1">
    <location>
        <position position="65"/>
    </location>
    <ligand>
        <name>[4Fe-4S] cluster</name>
        <dbReference type="ChEBI" id="CHEBI:49883"/>
        <label>1</label>
    </ligand>
</feature>
<feature type="binding site" evidence="1">
    <location>
        <position position="68"/>
    </location>
    <ligand>
        <name>[4Fe-4S] cluster</name>
        <dbReference type="ChEBI" id="CHEBI:49883"/>
        <label>1</label>
    </ligand>
</feature>
<feature type="binding site" evidence="1">
    <location>
        <position position="72"/>
    </location>
    <ligand>
        <name>[4Fe-4S] cluster</name>
        <dbReference type="ChEBI" id="CHEBI:49883"/>
        <label>2</label>
    </ligand>
</feature>
<feature type="binding site" evidence="1">
    <location>
        <position position="101"/>
    </location>
    <ligand>
        <name>[4Fe-4S] cluster</name>
        <dbReference type="ChEBI" id="CHEBI:49883"/>
        <label>2</label>
    </ligand>
</feature>
<feature type="binding site" evidence="1">
    <location>
        <position position="104"/>
    </location>
    <ligand>
        <name>[4Fe-4S] cluster</name>
        <dbReference type="ChEBI" id="CHEBI:49883"/>
        <label>2</label>
    </ligand>
</feature>
<feature type="binding site" evidence="1">
    <location>
        <position position="107"/>
    </location>
    <ligand>
        <name>[4Fe-4S] cluster</name>
        <dbReference type="ChEBI" id="CHEBI:49883"/>
        <label>2</label>
    </ligand>
</feature>
<feature type="binding site" evidence="1">
    <location>
        <position position="111"/>
    </location>
    <ligand>
        <name>[4Fe-4S] cluster</name>
        <dbReference type="ChEBI" id="CHEBI:49883"/>
        <label>1</label>
    </ligand>
</feature>